<gene>
    <name evidence="1" type="primary">rpmA</name>
    <name evidence="1" type="synonym">rpl27</name>
    <name type="ordered locus">gsl0824</name>
</gene>
<reference key="1">
    <citation type="journal article" date="2003" name="DNA Res.">
        <title>Complete genome structure of Gloeobacter violaceus PCC 7421, a cyanobacterium that lacks thylakoids.</title>
        <authorList>
            <person name="Nakamura Y."/>
            <person name="Kaneko T."/>
            <person name="Sato S."/>
            <person name="Mimuro M."/>
            <person name="Miyashita H."/>
            <person name="Tsuchiya T."/>
            <person name="Sasamoto S."/>
            <person name="Watanabe A."/>
            <person name="Kawashima K."/>
            <person name="Kishida Y."/>
            <person name="Kiyokawa C."/>
            <person name="Kohara M."/>
            <person name="Matsumoto M."/>
            <person name="Matsuno A."/>
            <person name="Nakazaki N."/>
            <person name="Shimpo S."/>
            <person name="Takeuchi C."/>
            <person name="Yamada M."/>
            <person name="Tabata S."/>
        </authorList>
    </citation>
    <scope>NUCLEOTIDE SEQUENCE [LARGE SCALE GENOMIC DNA]</scope>
    <source>
        <strain>ATCC 29082 / PCC 7421</strain>
    </source>
</reference>
<sequence length="95" mass="10303">MAHKKGTGSTRNGRDSNAQRLGVKRYGGERVKAGNILIRQRGTKIHPGANVGRGSDDTLFALIEGIVTFERLGRDRKKVSVYPLAQTAMQPVAAE</sequence>
<feature type="chain" id="PRO_0000181094" description="Large ribosomal subunit protein bL27">
    <location>
        <begin position="1"/>
        <end position="95"/>
    </location>
</feature>
<feature type="region of interest" description="Disordered" evidence="2">
    <location>
        <begin position="1"/>
        <end position="25"/>
    </location>
</feature>
<feature type="compositionally biased region" description="Polar residues" evidence="2">
    <location>
        <begin position="7"/>
        <end position="19"/>
    </location>
</feature>
<proteinExistence type="inferred from homology"/>
<protein>
    <recommendedName>
        <fullName evidence="1">Large ribosomal subunit protein bL27</fullName>
    </recommendedName>
    <alternativeName>
        <fullName evidence="3">50S ribosomal protein L27</fullName>
    </alternativeName>
</protein>
<accession>Q7NME2</accession>
<organism>
    <name type="scientific">Gloeobacter violaceus (strain ATCC 29082 / PCC 7421)</name>
    <dbReference type="NCBI Taxonomy" id="251221"/>
    <lineage>
        <taxon>Bacteria</taxon>
        <taxon>Bacillati</taxon>
        <taxon>Cyanobacteriota</taxon>
        <taxon>Cyanophyceae</taxon>
        <taxon>Gloeobacterales</taxon>
        <taxon>Gloeobacteraceae</taxon>
        <taxon>Gloeobacter</taxon>
    </lineage>
</organism>
<comment type="similarity">
    <text evidence="1">Belongs to the bacterial ribosomal protein bL27 family.</text>
</comment>
<keyword id="KW-1185">Reference proteome</keyword>
<keyword id="KW-0687">Ribonucleoprotein</keyword>
<keyword id="KW-0689">Ribosomal protein</keyword>
<dbReference type="EMBL" id="BA000045">
    <property type="protein sequence ID" value="BAC88765.1"/>
    <property type="molecule type" value="Genomic_DNA"/>
</dbReference>
<dbReference type="RefSeq" id="NP_923770.1">
    <property type="nucleotide sequence ID" value="NC_005125.1"/>
</dbReference>
<dbReference type="RefSeq" id="WP_011140826.1">
    <property type="nucleotide sequence ID" value="NC_005125.1"/>
</dbReference>
<dbReference type="SMR" id="Q7NME2"/>
<dbReference type="FunCoup" id="Q7NME2">
    <property type="interactions" value="203"/>
</dbReference>
<dbReference type="STRING" id="251221.gene:10758301"/>
<dbReference type="EnsemblBacteria" id="BAC88765">
    <property type="protein sequence ID" value="BAC88765"/>
    <property type="gene ID" value="BAC88765"/>
</dbReference>
<dbReference type="KEGG" id="gvi:gsl0824"/>
<dbReference type="PATRIC" id="fig|251221.4.peg.842"/>
<dbReference type="eggNOG" id="COG0211">
    <property type="taxonomic scope" value="Bacteria"/>
</dbReference>
<dbReference type="HOGENOM" id="CLU_095424_4_0_3"/>
<dbReference type="InParanoid" id="Q7NME2"/>
<dbReference type="OrthoDB" id="9803474at2"/>
<dbReference type="PhylomeDB" id="Q7NME2"/>
<dbReference type="Proteomes" id="UP000000557">
    <property type="component" value="Chromosome"/>
</dbReference>
<dbReference type="GO" id="GO:0022625">
    <property type="term" value="C:cytosolic large ribosomal subunit"/>
    <property type="evidence" value="ECO:0000318"/>
    <property type="project" value="GO_Central"/>
</dbReference>
<dbReference type="GO" id="GO:0003735">
    <property type="term" value="F:structural constituent of ribosome"/>
    <property type="evidence" value="ECO:0000318"/>
    <property type="project" value="GO_Central"/>
</dbReference>
<dbReference type="GO" id="GO:0006412">
    <property type="term" value="P:translation"/>
    <property type="evidence" value="ECO:0007669"/>
    <property type="project" value="UniProtKB-UniRule"/>
</dbReference>
<dbReference type="FunFam" id="2.40.50.100:FF:000004">
    <property type="entry name" value="50S ribosomal protein L27"/>
    <property type="match status" value="1"/>
</dbReference>
<dbReference type="Gene3D" id="2.40.50.100">
    <property type="match status" value="1"/>
</dbReference>
<dbReference type="HAMAP" id="MF_00539">
    <property type="entry name" value="Ribosomal_bL27"/>
    <property type="match status" value="1"/>
</dbReference>
<dbReference type="InterPro" id="IPR001684">
    <property type="entry name" value="Ribosomal_bL27"/>
</dbReference>
<dbReference type="InterPro" id="IPR018261">
    <property type="entry name" value="Ribosomal_bL27_CS"/>
</dbReference>
<dbReference type="NCBIfam" id="TIGR00062">
    <property type="entry name" value="L27"/>
    <property type="match status" value="1"/>
</dbReference>
<dbReference type="PANTHER" id="PTHR15893:SF0">
    <property type="entry name" value="LARGE RIBOSOMAL SUBUNIT PROTEIN BL27M"/>
    <property type="match status" value="1"/>
</dbReference>
<dbReference type="PANTHER" id="PTHR15893">
    <property type="entry name" value="RIBOSOMAL PROTEIN L27"/>
    <property type="match status" value="1"/>
</dbReference>
<dbReference type="Pfam" id="PF01016">
    <property type="entry name" value="Ribosomal_L27"/>
    <property type="match status" value="1"/>
</dbReference>
<dbReference type="PRINTS" id="PR00063">
    <property type="entry name" value="RIBOSOMALL27"/>
</dbReference>
<dbReference type="SUPFAM" id="SSF110324">
    <property type="entry name" value="Ribosomal L27 protein-like"/>
    <property type="match status" value="1"/>
</dbReference>
<dbReference type="PROSITE" id="PS00831">
    <property type="entry name" value="RIBOSOMAL_L27"/>
    <property type="match status" value="1"/>
</dbReference>
<evidence type="ECO:0000255" key="1">
    <source>
        <dbReference type="HAMAP-Rule" id="MF_00539"/>
    </source>
</evidence>
<evidence type="ECO:0000256" key="2">
    <source>
        <dbReference type="SAM" id="MobiDB-lite"/>
    </source>
</evidence>
<evidence type="ECO:0000305" key="3"/>
<name>RL27_GLOVI</name>